<protein>
    <recommendedName>
        <fullName>EKC/KEOPS complex subunit BUD32</fullName>
        <ecNumber evidence="2">3.6.-.-</ecNumber>
    </recommendedName>
    <alternativeName>
        <fullName>Atypical serine/threonine protein kinase BUD32</fullName>
        <ecNumber evidence="1">2.7.11.1</ecNumber>
    </alternativeName>
</protein>
<feature type="chain" id="PRO_0000278910" description="EKC/KEOPS complex subunit BUD32">
    <location>
        <begin position="1"/>
        <end position="267"/>
    </location>
</feature>
<feature type="domain" description="Protein kinase" evidence="3">
    <location>
        <begin position="20"/>
        <end position="267"/>
    </location>
</feature>
<feature type="active site" description="Proton acceptor" evidence="3 4">
    <location>
        <position position="160"/>
    </location>
</feature>
<feature type="binding site" evidence="3">
    <location>
        <begin position="26"/>
        <end position="34"/>
    </location>
    <ligand>
        <name>ATP</name>
        <dbReference type="ChEBI" id="CHEBI:30616"/>
    </ligand>
</feature>
<feature type="binding site" evidence="3">
    <location>
        <position position="49"/>
    </location>
    <ligand>
        <name>ATP</name>
        <dbReference type="ChEBI" id="CHEBI:30616"/>
    </ligand>
</feature>
<evidence type="ECO:0000250" key="1">
    <source>
        <dbReference type="UniProtKB" id="P53323"/>
    </source>
</evidence>
<evidence type="ECO:0000250" key="2">
    <source>
        <dbReference type="UniProtKB" id="Q9UYB9"/>
    </source>
</evidence>
<evidence type="ECO:0000255" key="3">
    <source>
        <dbReference type="PROSITE-ProRule" id="PRU00159"/>
    </source>
</evidence>
<evidence type="ECO:0000255" key="4">
    <source>
        <dbReference type="PROSITE-ProRule" id="PRU10028"/>
    </source>
</evidence>
<evidence type="ECO:0000305" key="5"/>
<keyword id="KW-0010">Activator</keyword>
<keyword id="KW-0067">ATP-binding</keyword>
<keyword id="KW-0158">Chromosome</keyword>
<keyword id="KW-0963">Cytoplasm</keyword>
<keyword id="KW-0378">Hydrolase</keyword>
<keyword id="KW-0418">Kinase</keyword>
<keyword id="KW-0547">Nucleotide-binding</keyword>
<keyword id="KW-0539">Nucleus</keyword>
<keyword id="KW-0597">Phosphoprotein</keyword>
<keyword id="KW-1185">Reference proteome</keyword>
<keyword id="KW-0723">Serine/threonine-protein kinase</keyword>
<keyword id="KW-0779">Telomere</keyword>
<keyword id="KW-0804">Transcription</keyword>
<keyword id="KW-0805">Transcription regulation</keyword>
<keyword id="KW-0808">Transferase</keyword>
<keyword id="KW-0819">tRNA processing</keyword>
<sequence length="267" mass="29394">MAAADDAQFPPPKVLTYPASTPPTLITQGAEGRLYKTTHLTRDRPCALKYRPPKPYRHPVLDARLTKARLSSEAKVLERCWREGVPVPAVYAMDPAAGWMMMEWIEGIPVRVGINEWLGDRPEEGAEIPQVADETPIVDLMKRIGAAIGALHKTGVVHGDLTTSNMMLRPRGFNPVDGAPGDEGKAGSVEGDVVLIDFGLATQSMSDEDRAVDLYVLERAFASTHPRAERLFATLLESYKSTFKKASSVLIKLEDVRMRGRKRSMLG</sequence>
<reference key="1">
    <citation type="journal article" date="2015" name="Genome Announc.">
        <title>Draft genome sequence of the cellulolytic fungus Chaetomium globosum.</title>
        <authorList>
            <person name="Cuomo C.A."/>
            <person name="Untereiner W.A."/>
            <person name="Ma L.-J."/>
            <person name="Grabherr M."/>
            <person name="Birren B.W."/>
        </authorList>
    </citation>
    <scope>NUCLEOTIDE SEQUENCE [LARGE SCALE GENOMIC DNA]</scope>
    <source>
        <strain>ATCC 6205 / CBS 148.51 / DSM 1962 / NBRC 6347 / NRRL 1970</strain>
    </source>
</reference>
<accession>Q2HGY8</accession>
<comment type="function">
    <text evidence="1">Component of the EKC/KEOPS complex that is required for the formation of a threonylcarbamoyl group on adenosine at position 37 (t(6)A37) in tRNAs that read codons beginning with adenine. The complex is probably involved in the transfer of the threonylcarbamoyl moiety of threonylcarbamoyl-AMP (TC-AMP) to the N6 group of A37. BUD32 has ATPase activity in the context of the EKC/KEOPS complex and likely plays a supporting role to the catalytic subunit KAE1. The EKC/KEOPS complex also promotes both telomere uncapping and telomere elongation. The complex is required for efficient recruitment of transcriptional coactivators.</text>
</comment>
<comment type="catalytic activity">
    <reaction evidence="1">
        <text>L-seryl-[protein] + ATP = O-phospho-L-seryl-[protein] + ADP + H(+)</text>
        <dbReference type="Rhea" id="RHEA:17989"/>
        <dbReference type="Rhea" id="RHEA-COMP:9863"/>
        <dbReference type="Rhea" id="RHEA-COMP:11604"/>
        <dbReference type="ChEBI" id="CHEBI:15378"/>
        <dbReference type="ChEBI" id="CHEBI:29999"/>
        <dbReference type="ChEBI" id="CHEBI:30616"/>
        <dbReference type="ChEBI" id="CHEBI:83421"/>
        <dbReference type="ChEBI" id="CHEBI:456216"/>
        <dbReference type="EC" id="2.7.11.1"/>
    </reaction>
</comment>
<comment type="catalytic activity">
    <reaction evidence="1">
        <text>L-threonyl-[protein] + ATP = O-phospho-L-threonyl-[protein] + ADP + H(+)</text>
        <dbReference type="Rhea" id="RHEA:46608"/>
        <dbReference type="Rhea" id="RHEA-COMP:11060"/>
        <dbReference type="Rhea" id="RHEA-COMP:11605"/>
        <dbReference type="ChEBI" id="CHEBI:15378"/>
        <dbReference type="ChEBI" id="CHEBI:30013"/>
        <dbReference type="ChEBI" id="CHEBI:30616"/>
        <dbReference type="ChEBI" id="CHEBI:61977"/>
        <dbReference type="ChEBI" id="CHEBI:456216"/>
        <dbReference type="EC" id="2.7.11.1"/>
    </reaction>
</comment>
<comment type="subunit">
    <text evidence="1">Component of the EKC/KEOPS complex composed of at least BUD32, CGI121, GON7, KAE1 and PCC1; the whole complex dimerizes.</text>
</comment>
<comment type="subcellular location">
    <subcellularLocation>
        <location evidence="1">Cytoplasm</location>
    </subcellularLocation>
    <subcellularLocation>
        <location evidence="1">Nucleus</location>
    </subcellularLocation>
    <subcellularLocation>
        <location evidence="1">Chromosome</location>
        <location evidence="1">Telomere</location>
    </subcellularLocation>
</comment>
<comment type="domain">
    <text evidence="1 2">This protein is considered an atypical serine/threonine kinase, because it lacks the conventional structural elements necessary for the substrate recognition as well as a lysine residue that in all other serine/threonine kinases participates in the catalytic event (By similarity). BUD32 has protein kinase activity in vitro, but in the context of the EKC/KEOPS complex, the catalytic subunit KAE1 switches the activity of BUD32 from kinase into ATPase (By similarity).</text>
</comment>
<comment type="similarity">
    <text evidence="5">Belongs to the protein kinase superfamily. BUD32 family.</text>
</comment>
<dbReference type="EC" id="3.6.-.-" evidence="2"/>
<dbReference type="EC" id="2.7.11.1" evidence="1"/>
<dbReference type="EMBL" id="CH408029">
    <property type="protein sequence ID" value="EAQ92281.1"/>
    <property type="molecule type" value="Genomic_DNA"/>
</dbReference>
<dbReference type="RefSeq" id="XP_001219737.1">
    <property type="nucleotide sequence ID" value="XM_001219736.1"/>
</dbReference>
<dbReference type="SMR" id="Q2HGY8"/>
<dbReference type="FunCoup" id="Q2HGY8">
    <property type="interactions" value="768"/>
</dbReference>
<dbReference type="STRING" id="306901.Q2HGY8"/>
<dbReference type="GeneID" id="4388043"/>
<dbReference type="VEuPathDB" id="FungiDB:CHGG_00516"/>
<dbReference type="eggNOG" id="KOG3087">
    <property type="taxonomic scope" value="Eukaryota"/>
</dbReference>
<dbReference type="HOGENOM" id="CLU_063953_1_0_1"/>
<dbReference type="InParanoid" id="Q2HGY8"/>
<dbReference type="OMA" id="HKLYMEY"/>
<dbReference type="OrthoDB" id="3399at2759"/>
<dbReference type="Proteomes" id="UP000001056">
    <property type="component" value="Unassembled WGS sequence"/>
</dbReference>
<dbReference type="GO" id="GO:0000781">
    <property type="term" value="C:chromosome, telomeric region"/>
    <property type="evidence" value="ECO:0007669"/>
    <property type="project" value="UniProtKB-SubCell"/>
</dbReference>
<dbReference type="GO" id="GO:0005829">
    <property type="term" value="C:cytosol"/>
    <property type="evidence" value="ECO:0007669"/>
    <property type="project" value="TreeGrafter"/>
</dbReference>
<dbReference type="GO" id="GO:0000408">
    <property type="term" value="C:EKC/KEOPS complex"/>
    <property type="evidence" value="ECO:0007669"/>
    <property type="project" value="TreeGrafter"/>
</dbReference>
<dbReference type="GO" id="GO:0005634">
    <property type="term" value="C:nucleus"/>
    <property type="evidence" value="ECO:0007669"/>
    <property type="project" value="UniProtKB-SubCell"/>
</dbReference>
<dbReference type="GO" id="GO:0005524">
    <property type="term" value="F:ATP binding"/>
    <property type="evidence" value="ECO:0007669"/>
    <property type="project" value="UniProtKB-KW"/>
</dbReference>
<dbReference type="GO" id="GO:0016787">
    <property type="term" value="F:hydrolase activity"/>
    <property type="evidence" value="ECO:0007669"/>
    <property type="project" value="UniProtKB-KW"/>
</dbReference>
<dbReference type="GO" id="GO:0106310">
    <property type="term" value="F:protein serine kinase activity"/>
    <property type="evidence" value="ECO:0007669"/>
    <property type="project" value="RHEA"/>
</dbReference>
<dbReference type="GO" id="GO:0004674">
    <property type="term" value="F:protein serine/threonine kinase activity"/>
    <property type="evidence" value="ECO:0007669"/>
    <property type="project" value="UniProtKB-KW"/>
</dbReference>
<dbReference type="GO" id="GO:0008033">
    <property type="term" value="P:tRNA processing"/>
    <property type="evidence" value="ECO:0007669"/>
    <property type="project" value="UniProtKB-KW"/>
</dbReference>
<dbReference type="GO" id="GO:0070525">
    <property type="term" value="P:tRNA threonylcarbamoyladenosine metabolic process"/>
    <property type="evidence" value="ECO:0007669"/>
    <property type="project" value="TreeGrafter"/>
</dbReference>
<dbReference type="FunFam" id="3.30.200.20:FF:000603">
    <property type="entry name" value="EKC/KEOPS complex subunit bud32"/>
    <property type="match status" value="1"/>
</dbReference>
<dbReference type="FunFam" id="1.10.510.10:FF:000845">
    <property type="entry name" value="Probable bifunctional tRNA threonylcarbamoyladenosine biosynthesis protein"/>
    <property type="match status" value="1"/>
</dbReference>
<dbReference type="Gene3D" id="3.30.200.20">
    <property type="entry name" value="Phosphorylase Kinase, domain 1"/>
    <property type="match status" value="1"/>
</dbReference>
<dbReference type="Gene3D" id="1.10.510.10">
    <property type="entry name" value="Transferase(Phosphotransferase) domain 1"/>
    <property type="match status" value="1"/>
</dbReference>
<dbReference type="InterPro" id="IPR022495">
    <property type="entry name" value="Bud32"/>
</dbReference>
<dbReference type="InterPro" id="IPR011009">
    <property type="entry name" value="Kinase-like_dom_sf"/>
</dbReference>
<dbReference type="InterPro" id="IPR000719">
    <property type="entry name" value="Prot_kinase_dom"/>
</dbReference>
<dbReference type="InterPro" id="IPR008266">
    <property type="entry name" value="Tyr_kinase_AS"/>
</dbReference>
<dbReference type="NCBIfam" id="TIGR03724">
    <property type="entry name" value="arch_bud32"/>
    <property type="match status" value="1"/>
</dbReference>
<dbReference type="PANTHER" id="PTHR12209:SF0">
    <property type="entry name" value="EKC_KEOPS COMPLEX SUBUNIT TP53RK"/>
    <property type="match status" value="1"/>
</dbReference>
<dbReference type="PANTHER" id="PTHR12209">
    <property type="entry name" value="NON-SPECIFIC SERINE/THREONINE PROTEIN KINASE"/>
    <property type="match status" value="1"/>
</dbReference>
<dbReference type="Pfam" id="PF00069">
    <property type="entry name" value="Pkinase"/>
    <property type="match status" value="1"/>
</dbReference>
<dbReference type="SUPFAM" id="SSF56112">
    <property type="entry name" value="Protein kinase-like (PK-like)"/>
    <property type="match status" value="1"/>
</dbReference>
<dbReference type="PROSITE" id="PS50011">
    <property type="entry name" value="PROTEIN_KINASE_DOM"/>
    <property type="match status" value="1"/>
</dbReference>
<dbReference type="PROSITE" id="PS00109">
    <property type="entry name" value="PROTEIN_KINASE_TYR"/>
    <property type="match status" value="1"/>
</dbReference>
<organism>
    <name type="scientific">Chaetomium globosum (strain ATCC 6205 / CBS 148.51 / DSM 1962 / NBRC 6347 / NRRL 1970)</name>
    <name type="common">Soil fungus</name>
    <dbReference type="NCBI Taxonomy" id="306901"/>
    <lineage>
        <taxon>Eukaryota</taxon>
        <taxon>Fungi</taxon>
        <taxon>Dikarya</taxon>
        <taxon>Ascomycota</taxon>
        <taxon>Pezizomycotina</taxon>
        <taxon>Sordariomycetes</taxon>
        <taxon>Sordariomycetidae</taxon>
        <taxon>Sordariales</taxon>
        <taxon>Chaetomiaceae</taxon>
        <taxon>Chaetomium</taxon>
    </lineage>
</organism>
<proteinExistence type="inferred from homology"/>
<name>BUD32_CHAGB</name>
<gene>
    <name type="primary">BUD32</name>
    <name type="ORF">CHGG_00516</name>
</gene>